<evidence type="ECO:0000255" key="1">
    <source>
        <dbReference type="HAMAP-Rule" id="MF_01384"/>
    </source>
</evidence>
<organism>
    <name type="scientific">Rhizobium johnstonii (strain DSM 114642 / LMG 32736 / 3841)</name>
    <name type="common">Rhizobium leguminosarum bv. viciae</name>
    <dbReference type="NCBI Taxonomy" id="216596"/>
    <lineage>
        <taxon>Bacteria</taxon>
        <taxon>Pseudomonadati</taxon>
        <taxon>Pseudomonadota</taxon>
        <taxon>Alphaproteobacteria</taxon>
        <taxon>Hyphomicrobiales</taxon>
        <taxon>Rhizobiaceae</taxon>
        <taxon>Rhizobium/Agrobacterium group</taxon>
        <taxon>Rhizobium</taxon>
        <taxon>Rhizobium johnstonii</taxon>
    </lineage>
</organism>
<feature type="chain" id="PRO_0000340503" description="Urease accessory protein UreD">
    <location>
        <begin position="1"/>
        <end position="273"/>
    </location>
</feature>
<name>URED_RHIJ3</name>
<reference key="1">
    <citation type="journal article" date="2006" name="Genome Biol.">
        <title>The genome of Rhizobium leguminosarum has recognizable core and accessory components.</title>
        <authorList>
            <person name="Young J.P.W."/>
            <person name="Crossman L.C."/>
            <person name="Johnston A.W.B."/>
            <person name="Thomson N.R."/>
            <person name="Ghazoui Z.F."/>
            <person name="Hull K.H."/>
            <person name="Wexler M."/>
            <person name="Curson A.R.J."/>
            <person name="Todd J.D."/>
            <person name="Poole P.S."/>
            <person name="Mauchline T.H."/>
            <person name="East A.K."/>
            <person name="Quail M.A."/>
            <person name="Churcher C."/>
            <person name="Arrowsmith C."/>
            <person name="Cherevach I."/>
            <person name="Chillingworth T."/>
            <person name="Clarke K."/>
            <person name="Cronin A."/>
            <person name="Davis P."/>
            <person name="Fraser A."/>
            <person name="Hance Z."/>
            <person name="Hauser H."/>
            <person name="Jagels K."/>
            <person name="Moule S."/>
            <person name="Mungall K."/>
            <person name="Norbertczak H."/>
            <person name="Rabbinowitsch E."/>
            <person name="Sanders M."/>
            <person name="Simmonds M."/>
            <person name="Whitehead S."/>
            <person name="Parkhill J."/>
        </authorList>
    </citation>
    <scope>NUCLEOTIDE SEQUENCE [LARGE SCALE GENOMIC DNA]</scope>
    <source>
        <strain>DSM 114642 / LMG 32736 / 3841</strain>
    </source>
</reference>
<keyword id="KW-0143">Chaperone</keyword>
<keyword id="KW-0963">Cytoplasm</keyword>
<keyword id="KW-0996">Nickel insertion</keyword>
<comment type="function">
    <text evidence="1">Required for maturation of urease via the functional incorporation of the urease nickel metallocenter.</text>
</comment>
<comment type="subunit">
    <text evidence="1">UreD, UreF and UreG form a complex that acts as a GTP-hydrolysis-dependent molecular chaperone, activating the urease apoprotein by helping to assemble the nickel containing metallocenter of UreC. The UreE protein probably delivers the nickel.</text>
</comment>
<comment type="subcellular location">
    <subcellularLocation>
        <location evidence="1">Cytoplasm</location>
    </subcellularLocation>
</comment>
<comment type="similarity">
    <text evidence="1">Belongs to the UreD family.</text>
</comment>
<accession>Q1MCV4</accession>
<protein>
    <recommendedName>
        <fullName evidence="1">Urease accessory protein UreD</fullName>
    </recommendedName>
</protein>
<proteinExistence type="inferred from homology"/>
<gene>
    <name evidence="1" type="primary">ureD</name>
    <name type="ordered locus">RL3736</name>
</gene>
<dbReference type="EMBL" id="AM236080">
    <property type="protein sequence ID" value="CAK09226.1"/>
    <property type="molecule type" value="Genomic_DNA"/>
</dbReference>
<dbReference type="RefSeq" id="WP_011653189.1">
    <property type="nucleotide sequence ID" value="NC_008380.1"/>
</dbReference>
<dbReference type="SMR" id="Q1MCV4"/>
<dbReference type="EnsemblBacteria" id="CAK09226">
    <property type="protein sequence ID" value="CAK09226"/>
    <property type="gene ID" value="RL3736"/>
</dbReference>
<dbReference type="KEGG" id="rle:RL3736"/>
<dbReference type="eggNOG" id="COG0829">
    <property type="taxonomic scope" value="Bacteria"/>
</dbReference>
<dbReference type="HOGENOM" id="CLU_056339_2_0_5"/>
<dbReference type="Proteomes" id="UP000006575">
    <property type="component" value="Chromosome"/>
</dbReference>
<dbReference type="GO" id="GO:0005737">
    <property type="term" value="C:cytoplasm"/>
    <property type="evidence" value="ECO:0007669"/>
    <property type="project" value="UniProtKB-SubCell"/>
</dbReference>
<dbReference type="GO" id="GO:0016151">
    <property type="term" value="F:nickel cation binding"/>
    <property type="evidence" value="ECO:0007669"/>
    <property type="project" value="UniProtKB-UniRule"/>
</dbReference>
<dbReference type="HAMAP" id="MF_01384">
    <property type="entry name" value="UreD"/>
    <property type="match status" value="1"/>
</dbReference>
<dbReference type="InterPro" id="IPR002669">
    <property type="entry name" value="UreD"/>
</dbReference>
<dbReference type="PANTHER" id="PTHR33643">
    <property type="entry name" value="UREASE ACCESSORY PROTEIN D"/>
    <property type="match status" value="1"/>
</dbReference>
<dbReference type="PANTHER" id="PTHR33643:SF1">
    <property type="entry name" value="UREASE ACCESSORY PROTEIN D"/>
    <property type="match status" value="1"/>
</dbReference>
<dbReference type="Pfam" id="PF01774">
    <property type="entry name" value="UreD"/>
    <property type="match status" value="1"/>
</dbReference>
<sequence length="273" mass="29261">MTIAAAGTRPQRAEGRGHLAAKLFDGRTRIRELYQEGAAKIRLPDTFDASMEAVIINTAGGLTGGDRMDWSVDAGPGTRIDVTTQACEKIYKASAGIAEVATSIKVGAQARVDWLPQETILFDRAALFRRLDVDLDESAEFLAVEAVLLGRKAMGEAVVSGLFRDRWRIRRSGQLIHAEELRLSEGVAALAARQAVLGGQVAFATLLYAGPLLEAYLSKVRPLVEGSMGGASAWNGKLVVRLAAADGFSLRKILIPVISALRNGAPVPKVWNL</sequence>